<reference key="1">
    <citation type="journal article" date="1999" name="Nature">
        <title>Evidence for lateral gene transfer between Archaea and Bacteria from genome sequence of Thermotoga maritima.</title>
        <authorList>
            <person name="Nelson K.E."/>
            <person name="Clayton R.A."/>
            <person name="Gill S.R."/>
            <person name="Gwinn M.L."/>
            <person name="Dodson R.J."/>
            <person name="Haft D.H."/>
            <person name="Hickey E.K."/>
            <person name="Peterson J.D."/>
            <person name="Nelson W.C."/>
            <person name="Ketchum K.A."/>
            <person name="McDonald L.A."/>
            <person name="Utterback T.R."/>
            <person name="Malek J.A."/>
            <person name="Linher K.D."/>
            <person name="Garrett M.M."/>
            <person name="Stewart A.M."/>
            <person name="Cotton M.D."/>
            <person name="Pratt M.S."/>
            <person name="Phillips C.A."/>
            <person name="Richardson D.L."/>
            <person name="Heidelberg J.F."/>
            <person name="Sutton G.G."/>
            <person name="Fleischmann R.D."/>
            <person name="Eisen J.A."/>
            <person name="White O."/>
            <person name="Salzberg S.L."/>
            <person name="Smith H.O."/>
            <person name="Venter J.C."/>
            <person name="Fraser C.M."/>
        </authorList>
    </citation>
    <scope>NUCLEOTIDE SEQUENCE [LARGE SCALE GENOMIC DNA]</scope>
    <source>
        <strain>ATCC 43589 / DSM 3109 / JCM 10099 / NBRC 100826 / MSB8</strain>
    </source>
</reference>
<proteinExistence type="inferred from homology"/>
<organism>
    <name type="scientific">Thermotoga maritima (strain ATCC 43589 / DSM 3109 / JCM 10099 / NBRC 100826 / MSB8)</name>
    <dbReference type="NCBI Taxonomy" id="243274"/>
    <lineage>
        <taxon>Bacteria</taxon>
        <taxon>Thermotogati</taxon>
        <taxon>Thermotogota</taxon>
        <taxon>Thermotogae</taxon>
        <taxon>Thermotogales</taxon>
        <taxon>Thermotogaceae</taxon>
        <taxon>Thermotoga</taxon>
    </lineage>
</organism>
<accession>Q9WYZ0</accession>
<keyword id="KW-0067">ATP-binding</keyword>
<keyword id="KW-0963">Cytoplasm</keyword>
<keyword id="KW-1015">Disulfide bond</keyword>
<keyword id="KW-0547">Nucleotide-binding</keyword>
<keyword id="KW-1185">Reference proteome</keyword>
<keyword id="KW-0694">RNA-binding</keyword>
<keyword id="KW-0808">Transferase</keyword>
<keyword id="KW-0819">tRNA processing</keyword>
<keyword id="KW-0820">tRNA-binding</keyword>
<feature type="chain" id="PRO_0000121693" description="tRNA-specific 2-thiouridylase MnmA">
    <location>
        <begin position="1"/>
        <end position="358"/>
    </location>
</feature>
<feature type="region of interest" description="Interaction with tRNA" evidence="1">
    <location>
        <begin position="151"/>
        <end position="153"/>
    </location>
</feature>
<feature type="active site" description="Nucleophile" evidence="1">
    <location>
        <position position="103"/>
    </location>
</feature>
<feature type="active site" description="Cysteine persulfide intermediate" evidence="1">
    <location>
        <position position="201"/>
    </location>
</feature>
<feature type="binding site" evidence="1">
    <location>
        <begin position="6"/>
        <end position="13"/>
    </location>
    <ligand>
        <name>ATP</name>
        <dbReference type="ChEBI" id="CHEBI:30616"/>
    </ligand>
</feature>
<feature type="binding site" evidence="1">
    <location>
        <position position="32"/>
    </location>
    <ligand>
        <name>ATP</name>
        <dbReference type="ChEBI" id="CHEBI:30616"/>
    </ligand>
</feature>
<feature type="binding site" evidence="1">
    <location>
        <position position="127"/>
    </location>
    <ligand>
        <name>ATP</name>
        <dbReference type="ChEBI" id="CHEBI:30616"/>
    </ligand>
</feature>
<feature type="site" description="Interaction with tRNA" evidence="1">
    <location>
        <position position="128"/>
    </location>
</feature>
<feature type="site" description="Interaction with tRNA" evidence="1">
    <location>
        <position position="337"/>
    </location>
</feature>
<feature type="disulfide bond" description="Alternate" evidence="1">
    <location>
        <begin position="103"/>
        <end position="201"/>
    </location>
</feature>
<gene>
    <name evidence="1" type="primary">mnmA</name>
    <name type="synonym">trmU</name>
    <name type="ordered locus">TM_0520</name>
</gene>
<comment type="function">
    <text evidence="1">Catalyzes the 2-thiolation of uridine at the wobble position (U34) of tRNA, leading to the formation of s(2)U34.</text>
</comment>
<comment type="catalytic activity">
    <reaction evidence="1">
        <text>S-sulfanyl-L-cysteinyl-[protein] + uridine(34) in tRNA + AH2 + ATP = 2-thiouridine(34) in tRNA + L-cysteinyl-[protein] + A + AMP + diphosphate + H(+)</text>
        <dbReference type="Rhea" id="RHEA:47032"/>
        <dbReference type="Rhea" id="RHEA-COMP:10131"/>
        <dbReference type="Rhea" id="RHEA-COMP:11726"/>
        <dbReference type="Rhea" id="RHEA-COMP:11727"/>
        <dbReference type="Rhea" id="RHEA-COMP:11728"/>
        <dbReference type="ChEBI" id="CHEBI:13193"/>
        <dbReference type="ChEBI" id="CHEBI:15378"/>
        <dbReference type="ChEBI" id="CHEBI:17499"/>
        <dbReference type="ChEBI" id="CHEBI:29950"/>
        <dbReference type="ChEBI" id="CHEBI:30616"/>
        <dbReference type="ChEBI" id="CHEBI:33019"/>
        <dbReference type="ChEBI" id="CHEBI:61963"/>
        <dbReference type="ChEBI" id="CHEBI:65315"/>
        <dbReference type="ChEBI" id="CHEBI:87170"/>
        <dbReference type="ChEBI" id="CHEBI:456215"/>
        <dbReference type="EC" id="2.8.1.13"/>
    </reaction>
</comment>
<comment type="subcellular location">
    <subcellularLocation>
        <location evidence="1">Cytoplasm</location>
    </subcellularLocation>
</comment>
<comment type="similarity">
    <text evidence="1">Belongs to the MnmA/TRMU family.</text>
</comment>
<dbReference type="EC" id="2.8.1.13" evidence="1"/>
<dbReference type="EMBL" id="AE000512">
    <property type="protein sequence ID" value="AAD35605.1"/>
    <property type="molecule type" value="Genomic_DNA"/>
</dbReference>
<dbReference type="PIR" id="F72365">
    <property type="entry name" value="F72365"/>
</dbReference>
<dbReference type="RefSeq" id="NP_228330.1">
    <property type="nucleotide sequence ID" value="NC_000853.1"/>
</dbReference>
<dbReference type="RefSeq" id="WP_004081405.1">
    <property type="nucleotide sequence ID" value="NC_000853.1"/>
</dbReference>
<dbReference type="SMR" id="Q9WYZ0"/>
<dbReference type="FunCoup" id="Q9WYZ0">
    <property type="interactions" value="360"/>
</dbReference>
<dbReference type="STRING" id="243274.TM_0520"/>
<dbReference type="PaxDb" id="243274-THEMA_02075"/>
<dbReference type="EnsemblBacteria" id="AAD35605">
    <property type="protein sequence ID" value="AAD35605"/>
    <property type="gene ID" value="TM_0520"/>
</dbReference>
<dbReference type="KEGG" id="tma:TM0520"/>
<dbReference type="KEGG" id="tmi:THEMA_02075"/>
<dbReference type="KEGG" id="tmm:Tmari_0516"/>
<dbReference type="KEGG" id="tmw:THMA_0532"/>
<dbReference type="eggNOG" id="COG0482">
    <property type="taxonomic scope" value="Bacteria"/>
</dbReference>
<dbReference type="InParanoid" id="Q9WYZ0"/>
<dbReference type="OrthoDB" id="9800696at2"/>
<dbReference type="Proteomes" id="UP000008183">
    <property type="component" value="Chromosome"/>
</dbReference>
<dbReference type="GO" id="GO:0005737">
    <property type="term" value="C:cytoplasm"/>
    <property type="evidence" value="ECO:0007669"/>
    <property type="project" value="UniProtKB-SubCell"/>
</dbReference>
<dbReference type="GO" id="GO:0005524">
    <property type="term" value="F:ATP binding"/>
    <property type="evidence" value="ECO:0007669"/>
    <property type="project" value="UniProtKB-KW"/>
</dbReference>
<dbReference type="GO" id="GO:0000049">
    <property type="term" value="F:tRNA binding"/>
    <property type="evidence" value="ECO:0007669"/>
    <property type="project" value="UniProtKB-KW"/>
</dbReference>
<dbReference type="GO" id="GO:0103016">
    <property type="term" value="F:tRNA-uridine 2-sulfurtransferase activity"/>
    <property type="evidence" value="ECO:0007669"/>
    <property type="project" value="UniProtKB-EC"/>
</dbReference>
<dbReference type="GO" id="GO:0002143">
    <property type="term" value="P:tRNA wobble position uridine thiolation"/>
    <property type="evidence" value="ECO:0000318"/>
    <property type="project" value="GO_Central"/>
</dbReference>
<dbReference type="CDD" id="cd01998">
    <property type="entry name" value="MnmA_TRMU-like"/>
    <property type="match status" value="1"/>
</dbReference>
<dbReference type="FunFam" id="2.30.30.280:FF:000001">
    <property type="entry name" value="tRNA-specific 2-thiouridylase MnmA"/>
    <property type="match status" value="1"/>
</dbReference>
<dbReference type="FunFam" id="2.40.30.10:FF:000242">
    <property type="entry name" value="tRNA-specific 2-thiouridylase MnmA"/>
    <property type="match status" value="1"/>
</dbReference>
<dbReference type="FunFam" id="3.40.50.620:FF:000302">
    <property type="entry name" value="tRNA-specific 2-thiouridylase MnmA"/>
    <property type="match status" value="1"/>
</dbReference>
<dbReference type="Gene3D" id="2.30.30.280">
    <property type="entry name" value="Adenine nucleotide alpha hydrolases-like domains"/>
    <property type="match status" value="1"/>
</dbReference>
<dbReference type="Gene3D" id="3.40.50.620">
    <property type="entry name" value="HUPs"/>
    <property type="match status" value="1"/>
</dbReference>
<dbReference type="Gene3D" id="2.40.30.10">
    <property type="entry name" value="Translation factors"/>
    <property type="match status" value="1"/>
</dbReference>
<dbReference type="HAMAP" id="MF_00144">
    <property type="entry name" value="tRNA_thiouridyl_MnmA"/>
    <property type="match status" value="1"/>
</dbReference>
<dbReference type="InterPro" id="IPR004506">
    <property type="entry name" value="MnmA-like"/>
</dbReference>
<dbReference type="InterPro" id="IPR046885">
    <property type="entry name" value="MnmA-like_C"/>
</dbReference>
<dbReference type="InterPro" id="IPR046884">
    <property type="entry name" value="MnmA-like_central"/>
</dbReference>
<dbReference type="InterPro" id="IPR023382">
    <property type="entry name" value="MnmA-like_central_sf"/>
</dbReference>
<dbReference type="InterPro" id="IPR014729">
    <property type="entry name" value="Rossmann-like_a/b/a_fold"/>
</dbReference>
<dbReference type="NCBIfam" id="NF001138">
    <property type="entry name" value="PRK00143.1"/>
    <property type="match status" value="1"/>
</dbReference>
<dbReference type="NCBIfam" id="TIGR00420">
    <property type="entry name" value="trmU"/>
    <property type="match status" value="1"/>
</dbReference>
<dbReference type="PANTHER" id="PTHR11933:SF5">
    <property type="entry name" value="MITOCHONDRIAL TRNA-SPECIFIC 2-THIOURIDYLASE 1"/>
    <property type="match status" value="1"/>
</dbReference>
<dbReference type="PANTHER" id="PTHR11933">
    <property type="entry name" value="TRNA 5-METHYLAMINOMETHYL-2-THIOURIDYLATE -METHYLTRANSFERASE"/>
    <property type="match status" value="1"/>
</dbReference>
<dbReference type="Pfam" id="PF03054">
    <property type="entry name" value="tRNA_Me_trans"/>
    <property type="match status" value="1"/>
</dbReference>
<dbReference type="Pfam" id="PF20258">
    <property type="entry name" value="tRNA_Me_trans_C"/>
    <property type="match status" value="1"/>
</dbReference>
<dbReference type="Pfam" id="PF20259">
    <property type="entry name" value="tRNA_Me_trans_M"/>
    <property type="match status" value="1"/>
</dbReference>
<dbReference type="SUPFAM" id="SSF52402">
    <property type="entry name" value="Adenine nucleotide alpha hydrolases-like"/>
    <property type="match status" value="1"/>
</dbReference>
<sequence length="358" mass="40670">MKVGVALSGGVDSAVALYLLLKEGHEVKAFHMKTKEDEFFIKKEIKKKVCCSPSDTADAMRIAHFLGVEIEIVDVKEIFREKVIEPFKRDLLKGLTPNPCAHCNRFVKFGYLMDYVLNQGFDAFASGHYARIEFSEKYGRKVIKKGVDLKKDQSYFLARIEPWRIERLIFPNGIYTKEEIRKIAEEAGIHVAKKQESQDVCFIPDGSIENFLKDEGITLKDGDIITPEGEVVGRHFGYPLYTIGQRKGFKIEKFGRRYYVRGKIPEKNVVVVSDLEDVFFSGLIAEDPVWHVEVPEEFRCVCRVRKKSEEAPAVVKVKDNEVEVSFEKKVFAVTPGQIAAFYDGDTLLGGAIIKEGIR</sequence>
<protein>
    <recommendedName>
        <fullName evidence="1">tRNA-specific 2-thiouridylase MnmA</fullName>
        <ecNumber evidence="1">2.8.1.13</ecNumber>
    </recommendedName>
</protein>
<name>MNMA_THEMA</name>
<evidence type="ECO:0000255" key="1">
    <source>
        <dbReference type="HAMAP-Rule" id="MF_00144"/>
    </source>
</evidence>